<accession>Q2IG33</accession>
<protein>
    <recommendedName>
        <fullName evidence="2">D-alanine--D-alanine ligase</fullName>
        <ecNumber evidence="2">6.3.2.4</ecNumber>
    </recommendedName>
    <alternativeName>
        <fullName evidence="2">D-Ala-D-Ala ligase</fullName>
    </alternativeName>
    <alternativeName>
        <fullName evidence="2">D-alanylalanine synthetase</fullName>
    </alternativeName>
</protein>
<reference key="1">
    <citation type="submission" date="2006-01" db="EMBL/GenBank/DDBJ databases">
        <title>Complete sequence of Anaeromyxobacter dehalogenans 2CP-C.</title>
        <authorList>
            <person name="Copeland A."/>
            <person name="Lucas S."/>
            <person name="Lapidus A."/>
            <person name="Barry K."/>
            <person name="Detter J.C."/>
            <person name="Glavina T."/>
            <person name="Hammon N."/>
            <person name="Israni S."/>
            <person name="Pitluck S."/>
            <person name="Brettin T."/>
            <person name="Bruce D."/>
            <person name="Han C."/>
            <person name="Tapia R."/>
            <person name="Gilna P."/>
            <person name="Kiss H."/>
            <person name="Schmutz J."/>
            <person name="Larimer F."/>
            <person name="Land M."/>
            <person name="Kyrpides N."/>
            <person name="Anderson I."/>
            <person name="Sanford R.A."/>
            <person name="Ritalahti K.M."/>
            <person name="Thomas H.S."/>
            <person name="Kirby J.R."/>
            <person name="Zhulin I.B."/>
            <person name="Loeffler F.E."/>
            <person name="Richardson P."/>
        </authorList>
    </citation>
    <scope>NUCLEOTIDE SEQUENCE [LARGE SCALE GENOMIC DNA]</scope>
    <source>
        <strain>2CP-C</strain>
    </source>
</reference>
<sequence length="308" mass="32040">MSTWTGKRVAVLYGGRSSEREVSLRTGAACAEALRQKGHDVVLVDVDLEVAARLRAERVEVAFVALHGRWGEDGSIQGLLESMAIPYTGSGVLASAMGMDKTVSKAIFRSLGLAVADYRVFPRAAAGAIGVDDLPFGLPCVVKPAGEGSSVGVHLVNAAAELGPACRDAAGYAGDVIVERYVKGTEVDVAVLEGKALGAIEIVPANAFYDYAAKYTAGTTKYFYPARIPEAHVRAVMEAAEAAHRGIGCSGVTRVDFIVAADGTPYILEVNTLPGMTATSLVPKIAAGLGLSFPDLCDRILDGAALKA</sequence>
<organism>
    <name type="scientific">Anaeromyxobacter dehalogenans (strain 2CP-C)</name>
    <dbReference type="NCBI Taxonomy" id="290397"/>
    <lineage>
        <taxon>Bacteria</taxon>
        <taxon>Pseudomonadati</taxon>
        <taxon>Myxococcota</taxon>
        <taxon>Myxococcia</taxon>
        <taxon>Myxococcales</taxon>
        <taxon>Cystobacterineae</taxon>
        <taxon>Anaeromyxobacteraceae</taxon>
        <taxon>Anaeromyxobacter</taxon>
    </lineage>
</organism>
<keyword id="KW-0067">ATP-binding</keyword>
<keyword id="KW-0133">Cell shape</keyword>
<keyword id="KW-0961">Cell wall biogenesis/degradation</keyword>
<keyword id="KW-0963">Cytoplasm</keyword>
<keyword id="KW-0436">Ligase</keyword>
<keyword id="KW-0460">Magnesium</keyword>
<keyword id="KW-0464">Manganese</keyword>
<keyword id="KW-0479">Metal-binding</keyword>
<keyword id="KW-0547">Nucleotide-binding</keyword>
<keyword id="KW-0573">Peptidoglycan synthesis</keyword>
<keyword id="KW-1185">Reference proteome</keyword>
<gene>
    <name evidence="2" type="primary">ddl</name>
    <name type="ordered locus">Adeh_3774</name>
</gene>
<comment type="function">
    <text evidence="2">Cell wall formation.</text>
</comment>
<comment type="catalytic activity">
    <reaction evidence="2">
        <text>2 D-alanine + ATP = D-alanyl-D-alanine + ADP + phosphate + H(+)</text>
        <dbReference type="Rhea" id="RHEA:11224"/>
        <dbReference type="ChEBI" id="CHEBI:15378"/>
        <dbReference type="ChEBI" id="CHEBI:30616"/>
        <dbReference type="ChEBI" id="CHEBI:43474"/>
        <dbReference type="ChEBI" id="CHEBI:57416"/>
        <dbReference type="ChEBI" id="CHEBI:57822"/>
        <dbReference type="ChEBI" id="CHEBI:456216"/>
        <dbReference type="EC" id="6.3.2.4"/>
    </reaction>
</comment>
<comment type="cofactor">
    <cofactor evidence="1">
        <name>Mg(2+)</name>
        <dbReference type="ChEBI" id="CHEBI:18420"/>
    </cofactor>
    <cofactor evidence="1">
        <name>Mn(2+)</name>
        <dbReference type="ChEBI" id="CHEBI:29035"/>
    </cofactor>
    <text evidence="1">Binds 2 magnesium or manganese ions per subunit.</text>
</comment>
<comment type="pathway">
    <text evidence="2">Cell wall biogenesis; peptidoglycan biosynthesis.</text>
</comment>
<comment type="subcellular location">
    <subcellularLocation>
        <location evidence="2">Cytoplasm</location>
    </subcellularLocation>
</comment>
<comment type="similarity">
    <text evidence="2">Belongs to the D-alanine--D-alanine ligase family.</text>
</comment>
<feature type="chain" id="PRO_0000341050" description="D-alanine--D-alanine ligase">
    <location>
        <begin position="1"/>
        <end position="308"/>
    </location>
</feature>
<feature type="domain" description="ATP-grasp" evidence="2">
    <location>
        <begin position="105"/>
        <end position="302"/>
    </location>
</feature>
<feature type="binding site" evidence="2">
    <location>
        <begin position="133"/>
        <end position="188"/>
    </location>
    <ligand>
        <name>ATP</name>
        <dbReference type="ChEBI" id="CHEBI:30616"/>
    </ligand>
</feature>
<feature type="binding site" evidence="2">
    <location>
        <position position="256"/>
    </location>
    <ligand>
        <name>Mg(2+)</name>
        <dbReference type="ChEBI" id="CHEBI:18420"/>
        <label>1</label>
    </ligand>
</feature>
<feature type="binding site" evidence="2">
    <location>
        <position position="269"/>
    </location>
    <ligand>
        <name>Mg(2+)</name>
        <dbReference type="ChEBI" id="CHEBI:18420"/>
        <label>1</label>
    </ligand>
</feature>
<feature type="binding site" evidence="2">
    <location>
        <position position="269"/>
    </location>
    <ligand>
        <name>Mg(2+)</name>
        <dbReference type="ChEBI" id="CHEBI:18420"/>
        <label>2</label>
    </ligand>
</feature>
<feature type="binding site" evidence="2">
    <location>
        <position position="271"/>
    </location>
    <ligand>
        <name>Mg(2+)</name>
        <dbReference type="ChEBI" id="CHEBI:18420"/>
        <label>2</label>
    </ligand>
</feature>
<dbReference type="EC" id="6.3.2.4" evidence="2"/>
<dbReference type="EMBL" id="CP000251">
    <property type="protein sequence ID" value="ABC83540.1"/>
    <property type="molecule type" value="Genomic_DNA"/>
</dbReference>
<dbReference type="RefSeq" id="WP_011422822.1">
    <property type="nucleotide sequence ID" value="NC_007760.1"/>
</dbReference>
<dbReference type="SMR" id="Q2IG33"/>
<dbReference type="STRING" id="290397.Adeh_3774"/>
<dbReference type="KEGG" id="ade:Adeh_3774"/>
<dbReference type="eggNOG" id="COG1181">
    <property type="taxonomic scope" value="Bacteria"/>
</dbReference>
<dbReference type="HOGENOM" id="CLU_039268_1_1_7"/>
<dbReference type="OrthoDB" id="9813261at2"/>
<dbReference type="UniPathway" id="UPA00219"/>
<dbReference type="Proteomes" id="UP000001935">
    <property type="component" value="Chromosome"/>
</dbReference>
<dbReference type="GO" id="GO:0005737">
    <property type="term" value="C:cytoplasm"/>
    <property type="evidence" value="ECO:0007669"/>
    <property type="project" value="UniProtKB-SubCell"/>
</dbReference>
<dbReference type="GO" id="GO:0005524">
    <property type="term" value="F:ATP binding"/>
    <property type="evidence" value="ECO:0007669"/>
    <property type="project" value="UniProtKB-KW"/>
</dbReference>
<dbReference type="GO" id="GO:0008716">
    <property type="term" value="F:D-alanine-D-alanine ligase activity"/>
    <property type="evidence" value="ECO:0007669"/>
    <property type="project" value="UniProtKB-UniRule"/>
</dbReference>
<dbReference type="GO" id="GO:0046872">
    <property type="term" value="F:metal ion binding"/>
    <property type="evidence" value="ECO:0007669"/>
    <property type="project" value="UniProtKB-KW"/>
</dbReference>
<dbReference type="GO" id="GO:0071555">
    <property type="term" value="P:cell wall organization"/>
    <property type="evidence" value="ECO:0007669"/>
    <property type="project" value="UniProtKB-KW"/>
</dbReference>
<dbReference type="GO" id="GO:0009252">
    <property type="term" value="P:peptidoglycan biosynthetic process"/>
    <property type="evidence" value="ECO:0007669"/>
    <property type="project" value="UniProtKB-UniRule"/>
</dbReference>
<dbReference type="GO" id="GO:0008360">
    <property type="term" value="P:regulation of cell shape"/>
    <property type="evidence" value="ECO:0007669"/>
    <property type="project" value="UniProtKB-KW"/>
</dbReference>
<dbReference type="FunFam" id="3.30.470.20:FF:000008">
    <property type="entry name" value="D-alanine--D-alanine ligase"/>
    <property type="match status" value="1"/>
</dbReference>
<dbReference type="Gene3D" id="3.40.50.20">
    <property type="match status" value="1"/>
</dbReference>
<dbReference type="Gene3D" id="3.30.1490.20">
    <property type="entry name" value="ATP-grasp fold, A domain"/>
    <property type="match status" value="1"/>
</dbReference>
<dbReference type="Gene3D" id="3.30.470.20">
    <property type="entry name" value="ATP-grasp fold, B domain"/>
    <property type="match status" value="1"/>
</dbReference>
<dbReference type="HAMAP" id="MF_00047">
    <property type="entry name" value="Dala_Dala_lig"/>
    <property type="match status" value="1"/>
</dbReference>
<dbReference type="InterPro" id="IPR011761">
    <property type="entry name" value="ATP-grasp"/>
</dbReference>
<dbReference type="InterPro" id="IPR013815">
    <property type="entry name" value="ATP_grasp_subdomain_1"/>
</dbReference>
<dbReference type="InterPro" id="IPR000291">
    <property type="entry name" value="D-Ala_lig_Van_CS"/>
</dbReference>
<dbReference type="InterPro" id="IPR005905">
    <property type="entry name" value="D_ala_D_ala"/>
</dbReference>
<dbReference type="InterPro" id="IPR011095">
    <property type="entry name" value="Dala_Dala_lig_C"/>
</dbReference>
<dbReference type="InterPro" id="IPR011127">
    <property type="entry name" value="Dala_Dala_lig_N"/>
</dbReference>
<dbReference type="InterPro" id="IPR016185">
    <property type="entry name" value="PreATP-grasp_dom_sf"/>
</dbReference>
<dbReference type="NCBIfam" id="TIGR01205">
    <property type="entry name" value="D_ala_D_alaTIGR"/>
    <property type="match status" value="1"/>
</dbReference>
<dbReference type="NCBIfam" id="NF002378">
    <property type="entry name" value="PRK01372.1"/>
    <property type="match status" value="1"/>
</dbReference>
<dbReference type="PANTHER" id="PTHR23132">
    <property type="entry name" value="D-ALANINE--D-ALANINE LIGASE"/>
    <property type="match status" value="1"/>
</dbReference>
<dbReference type="PANTHER" id="PTHR23132:SF23">
    <property type="entry name" value="D-ALANINE--D-ALANINE LIGASE B"/>
    <property type="match status" value="1"/>
</dbReference>
<dbReference type="Pfam" id="PF07478">
    <property type="entry name" value="Dala_Dala_lig_C"/>
    <property type="match status" value="1"/>
</dbReference>
<dbReference type="Pfam" id="PF01820">
    <property type="entry name" value="Dala_Dala_lig_N"/>
    <property type="match status" value="2"/>
</dbReference>
<dbReference type="PIRSF" id="PIRSF039102">
    <property type="entry name" value="Ddl/VanB"/>
    <property type="match status" value="1"/>
</dbReference>
<dbReference type="SUPFAM" id="SSF56059">
    <property type="entry name" value="Glutathione synthetase ATP-binding domain-like"/>
    <property type="match status" value="1"/>
</dbReference>
<dbReference type="SUPFAM" id="SSF52440">
    <property type="entry name" value="PreATP-grasp domain"/>
    <property type="match status" value="1"/>
</dbReference>
<dbReference type="PROSITE" id="PS50975">
    <property type="entry name" value="ATP_GRASP"/>
    <property type="match status" value="1"/>
</dbReference>
<dbReference type="PROSITE" id="PS00843">
    <property type="entry name" value="DALA_DALA_LIGASE_1"/>
    <property type="match status" value="1"/>
</dbReference>
<dbReference type="PROSITE" id="PS00844">
    <property type="entry name" value="DALA_DALA_LIGASE_2"/>
    <property type="match status" value="1"/>
</dbReference>
<name>DDL_ANADE</name>
<proteinExistence type="inferred from homology"/>
<evidence type="ECO:0000250" key="1"/>
<evidence type="ECO:0000255" key="2">
    <source>
        <dbReference type="HAMAP-Rule" id="MF_00047"/>
    </source>
</evidence>